<accession>Q9KY56</accession>
<proteinExistence type="inferred from homology"/>
<protein>
    <recommendedName>
        <fullName evidence="1">Succinate--CoA ligase [ADP-forming] subunit beta 1</fullName>
        <ecNumber evidence="1">6.2.1.5</ecNumber>
    </recommendedName>
    <alternativeName>
        <fullName evidence="1">Succinyl-CoA synthetase subunit beta 1</fullName>
        <shortName evidence="1">SCS-beta 1</shortName>
    </alternativeName>
</protein>
<sequence length="394" mass="41602">MDLFEYQARDLFAKHDVPVLAGEVIDTPEAAREITERLGGKSVVKAQVKVGGRGKAGGVKLAASADEAVARATDILGMDIKGHTVHKVMIAETAPEIVEEYYVSFLLDRANRTFLSIASVEGGVEIEEVAATRPEAVAKTPIDAIDGVTPEKAREIVEAAKFPAEVADKVADILVKLWDTFIKEDALLVEVNPLAKVVSGDVIALDGKVSLDDNAEFRHPDFEALHDKAAANPLEAAAKEKNLNYVKLDGEVGIIGNGAGLVMSTLDVVAYAGEAHGNVKPANFLDIGGGASAQVMANGLEIILGDPDVRSVFVNVFGGITACDEVANGIVQALKLLEDRGEKVEKPLVVRLDGNNAELGRKILTDANHPLVQRVDTMDGAADKAAELAHAAAK</sequence>
<comment type="function">
    <text evidence="1">Succinyl-CoA synthetase functions in the citric acid cycle (TCA), coupling the hydrolysis of succinyl-CoA to the synthesis of either ATP or GTP and thus represents the only step of substrate-level phosphorylation in the TCA. The beta subunit provides nucleotide specificity of the enzyme and binds the substrate succinate, while the binding sites for coenzyme A and phosphate are found in the alpha subunit.</text>
</comment>
<comment type="catalytic activity">
    <reaction evidence="1">
        <text>succinate + ATP + CoA = succinyl-CoA + ADP + phosphate</text>
        <dbReference type="Rhea" id="RHEA:17661"/>
        <dbReference type="ChEBI" id="CHEBI:30031"/>
        <dbReference type="ChEBI" id="CHEBI:30616"/>
        <dbReference type="ChEBI" id="CHEBI:43474"/>
        <dbReference type="ChEBI" id="CHEBI:57287"/>
        <dbReference type="ChEBI" id="CHEBI:57292"/>
        <dbReference type="ChEBI" id="CHEBI:456216"/>
        <dbReference type="EC" id="6.2.1.5"/>
    </reaction>
    <physiologicalReaction direction="right-to-left" evidence="1">
        <dbReference type="Rhea" id="RHEA:17663"/>
    </physiologicalReaction>
</comment>
<comment type="catalytic activity">
    <reaction evidence="1">
        <text>GTP + succinate + CoA = succinyl-CoA + GDP + phosphate</text>
        <dbReference type="Rhea" id="RHEA:22120"/>
        <dbReference type="ChEBI" id="CHEBI:30031"/>
        <dbReference type="ChEBI" id="CHEBI:37565"/>
        <dbReference type="ChEBI" id="CHEBI:43474"/>
        <dbReference type="ChEBI" id="CHEBI:57287"/>
        <dbReference type="ChEBI" id="CHEBI:57292"/>
        <dbReference type="ChEBI" id="CHEBI:58189"/>
    </reaction>
    <physiologicalReaction direction="right-to-left" evidence="1">
        <dbReference type="Rhea" id="RHEA:22122"/>
    </physiologicalReaction>
</comment>
<comment type="cofactor">
    <cofactor evidence="1">
        <name>Mg(2+)</name>
        <dbReference type="ChEBI" id="CHEBI:18420"/>
    </cofactor>
    <text evidence="1">Binds 1 Mg(2+) ion per subunit.</text>
</comment>
<comment type="pathway">
    <text evidence="1">Carbohydrate metabolism; tricarboxylic acid cycle; succinate from succinyl-CoA (ligase route): step 1/1.</text>
</comment>
<comment type="subunit">
    <text evidence="1">Heterotetramer of two alpha and two beta subunits.</text>
</comment>
<comment type="similarity">
    <text evidence="1">Belongs to the succinate/malate CoA ligase beta subunit family.</text>
</comment>
<gene>
    <name evidence="1" type="primary">sucC1</name>
    <name type="ordered locus">SCO4808</name>
    <name type="ORF">SCD63A.19</name>
</gene>
<name>SUCC1_STRCO</name>
<keyword id="KW-0067">ATP-binding</keyword>
<keyword id="KW-0436">Ligase</keyword>
<keyword id="KW-0460">Magnesium</keyword>
<keyword id="KW-0479">Metal-binding</keyword>
<keyword id="KW-0547">Nucleotide-binding</keyword>
<keyword id="KW-1185">Reference proteome</keyword>
<keyword id="KW-0816">Tricarboxylic acid cycle</keyword>
<evidence type="ECO:0000255" key="1">
    <source>
        <dbReference type="HAMAP-Rule" id="MF_00558"/>
    </source>
</evidence>
<organism>
    <name type="scientific">Streptomyces coelicolor (strain ATCC BAA-471 / A3(2) / M145)</name>
    <dbReference type="NCBI Taxonomy" id="100226"/>
    <lineage>
        <taxon>Bacteria</taxon>
        <taxon>Bacillati</taxon>
        <taxon>Actinomycetota</taxon>
        <taxon>Actinomycetes</taxon>
        <taxon>Kitasatosporales</taxon>
        <taxon>Streptomycetaceae</taxon>
        <taxon>Streptomyces</taxon>
        <taxon>Streptomyces albidoflavus group</taxon>
    </lineage>
</organism>
<feature type="chain" id="PRO_0000102869" description="Succinate--CoA ligase [ADP-forming] subunit beta 1">
    <location>
        <begin position="1"/>
        <end position="394"/>
    </location>
</feature>
<feature type="domain" description="ATP-grasp" evidence="1">
    <location>
        <begin position="9"/>
        <end position="237"/>
    </location>
</feature>
<feature type="binding site" evidence="1">
    <location>
        <position position="45"/>
    </location>
    <ligand>
        <name>ATP</name>
        <dbReference type="ChEBI" id="CHEBI:30616"/>
    </ligand>
</feature>
<feature type="binding site" evidence="1">
    <location>
        <begin position="52"/>
        <end position="54"/>
    </location>
    <ligand>
        <name>ATP</name>
        <dbReference type="ChEBI" id="CHEBI:30616"/>
    </ligand>
</feature>
<feature type="binding site" evidence="1">
    <location>
        <position position="92"/>
    </location>
    <ligand>
        <name>ATP</name>
        <dbReference type="ChEBI" id="CHEBI:30616"/>
    </ligand>
</feature>
<feature type="binding site" evidence="1">
    <location>
        <position position="95"/>
    </location>
    <ligand>
        <name>ATP</name>
        <dbReference type="ChEBI" id="CHEBI:30616"/>
    </ligand>
</feature>
<feature type="binding site" evidence="1">
    <location>
        <position position="100"/>
    </location>
    <ligand>
        <name>ATP</name>
        <dbReference type="ChEBI" id="CHEBI:30616"/>
    </ligand>
</feature>
<feature type="binding site" evidence="1">
    <location>
        <position position="192"/>
    </location>
    <ligand>
        <name>Mg(2+)</name>
        <dbReference type="ChEBI" id="CHEBI:18420"/>
    </ligand>
</feature>
<feature type="binding site" evidence="1">
    <location>
        <position position="206"/>
    </location>
    <ligand>
        <name>Mg(2+)</name>
        <dbReference type="ChEBI" id="CHEBI:18420"/>
    </ligand>
</feature>
<feature type="binding site" evidence="1">
    <location>
        <position position="257"/>
    </location>
    <ligand>
        <name>substrate</name>
        <note>ligand shared with subunit alpha</note>
    </ligand>
</feature>
<feature type="binding site" evidence="1">
    <location>
        <begin position="319"/>
        <end position="321"/>
    </location>
    <ligand>
        <name>substrate</name>
        <note>ligand shared with subunit alpha</note>
    </ligand>
</feature>
<reference key="1">
    <citation type="journal article" date="2002" name="Nature">
        <title>Complete genome sequence of the model actinomycete Streptomyces coelicolor A3(2).</title>
        <authorList>
            <person name="Bentley S.D."/>
            <person name="Chater K.F."/>
            <person name="Cerdeno-Tarraga A.-M."/>
            <person name="Challis G.L."/>
            <person name="Thomson N.R."/>
            <person name="James K.D."/>
            <person name="Harris D.E."/>
            <person name="Quail M.A."/>
            <person name="Kieser H."/>
            <person name="Harper D."/>
            <person name="Bateman A."/>
            <person name="Brown S."/>
            <person name="Chandra G."/>
            <person name="Chen C.W."/>
            <person name="Collins M."/>
            <person name="Cronin A."/>
            <person name="Fraser A."/>
            <person name="Goble A."/>
            <person name="Hidalgo J."/>
            <person name="Hornsby T."/>
            <person name="Howarth S."/>
            <person name="Huang C.-H."/>
            <person name="Kieser T."/>
            <person name="Larke L."/>
            <person name="Murphy L.D."/>
            <person name="Oliver K."/>
            <person name="O'Neil S."/>
            <person name="Rabbinowitsch E."/>
            <person name="Rajandream M.A."/>
            <person name="Rutherford K.M."/>
            <person name="Rutter S."/>
            <person name="Seeger K."/>
            <person name="Saunders D."/>
            <person name="Sharp S."/>
            <person name="Squares R."/>
            <person name="Squares S."/>
            <person name="Taylor K."/>
            <person name="Warren T."/>
            <person name="Wietzorrek A."/>
            <person name="Woodward J.R."/>
            <person name="Barrell B.G."/>
            <person name="Parkhill J."/>
            <person name="Hopwood D.A."/>
        </authorList>
    </citation>
    <scope>NUCLEOTIDE SEQUENCE [LARGE SCALE GENOMIC DNA]</scope>
    <source>
        <strain>ATCC BAA-471 / A3(2) / M145</strain>
    </source>
</reference>
<dbReference type="EC" id="6.2.1.5" evidence="1"/>
<dbReference type="EMBL" id="AL939121">
    <property type="protein sequence ID" value="CAB92671.1"/>
    <property type="molecule type" value="Genomic_DNA"/>
</dbReference>
<dbReference type="RefSeq" id="NP_628965.1">
    <property type="nucleotide sequence ID" value="NC_003888.3"/>
</dbReference>
<dbReference type="SMR" id="Q9KY56"/>
<dbReference type="FunCoup" id="Q9KY56">
    <property type="interactions" value="512"/>
</dbReference>
<dbReference type="STRING" id="100226.gene:17762457"/>
<dbReference type="PaxDb" id="100226-SCO4808"/>
<dbReference type="KEGG" id="sco:SCO4808"/>
<dbReference type="PATRIC" id="fig|100226.15.peg.4885"/>
<dbReference type="eggNOG" id="COG0045">
    <property type="taxonomic scope" value="Bacteria"/>
</dbReference>
<dbReference type="HOGENOM" id="CLU_037430_0_2_11"/>
<dbReference type="InParanoid" id="Q9KY56"/>
<dbReference type="OrthoDB" id="9802602at2"/>
<dbReference type="PhylomeDB" id="Q9KY56"/>
<dbReference type="UniPathway" id="UPA00223">
    <property type="reaction ID" value="UER00999"/>
</dbReference>
<dbReference type="Proteomes" id="UP000001973">
    <property type="component" value="Chromosome"/>
</dbReference>
<dbReference type="GO" id="GO:0005829">
    <property type="term" value="C:cytosol"/>
    <property type="evidence" value="ECO:0000318"/>
    <property type="project" value="GO_Central"/>
</dbReference>
<dbReference type="GO" id="GO:0042709">
    <property type="term" value="C:succinate-CoA ligase complex"/>
    <property type="evidence" value="ECO:0000318"/>
    <property type="project" value="GO_Central"/>
</dbReference>
<dbReference type="GO" id="GO:0005524">
    <property type="term" value="F:ATP binding"/>
    <property type="evidence" value="ECO:0007669"/>
    <property type="project" value="UniProtKB-UniRule"/>
</dbReference>
<dbReference type="GO" id="GO:0000287">
    <property type="term" value="F:magnesium ion binding"/>
    <property type="evidence" value="ECO:0007669"/>
    <property type="project" value="UniProtKB-UniRule"/>
</dbReference>
<dbReference type="GO" id="GO:0004775">
    <property type="term" value="F:succinate-CoA ligase (ADP-forming) activity"/>
    <property type="evidence" value="ECO:0000318"/>
    <property type="project" value="GO_Central"/>
</dbReference>
<dbReference type="GO" id="GO:0004776">
    <property type="term" value="F:succinate-CoA ligase (GDP-forming) activity"/>
    <property type="evidence" value="ECO:0007669"/>
    <property type="project" value="RHEA"/>
</dbReference>
<dbReference type="GO" id="GO:0006104">
    <property type="term" value="P:succinyl-CoA metabolic process"/>
    <property type="evidence" value="ECO:0000318"/>
    <property type="project" value="GO_Central"/>
</dbReference>
<dbReference type="GO" id="GO:0006099">
    <property type="term" value="P:tricarboxylic acid cycle"/>
    <property type="evidence" value="ECO:0000318"/>
    <property type="project" value="GO_Central"/>
</dbReference>
<dbReference type="FunFam" id="3.30.1490.20:FF:000014">
    <property type="entry name" value="Succinate--CoA ligase [ADP-forming] subunit beta"/>
    <property type="match status" value="1"/>
</dbReference>
<dbReference type="FunFam" id="3.30.470.20:FF:000002">
    <property type="entry name" value="Succinate--CoA ligase [ADP-forming] subunit beta"/>
    <property type="match status" value="1"/>
</dbReference>
<dbReference type="FunFam" id="3.40.50.261:FF:000007">
    <property type="entry name" value="Succinate--CoA ligase [ADP-forming] subunit beta"/>
    <property type="match status" value="1"/>
</dbReference>
<dbReference type="Gene3D" id="3.30.1490.20">
    <property type="entry name" value="ATP-grasp fold, A domain"/>
    <property type="match status" value="1"/>
</dbReference>
<dbReference type="Gene3D" id="3.30.470.20">
    <property type="entry name" value="ATP-grasp fold, B domain"/>
    <property type="match status" value="1"/>
</dbReference>
<dbReference type="Gene3D" id="3.40.50.261">
    <property type="entry name" value="Succinyl-CoA synthetase domains"/>
    <property type="match status" value="1"/>
</dbReference>
<dbReference type="HAMAP" id="MF_00558">
    <property type="entry name" value="Succ_CoA_beta"/>
    <property type="match status" value="1"/>
</dbReference>
<dbReference type="InterPro" id="IPR011761">
    <property type="entry name" value="ATP-grasp"/>
</dbReference>
<dbReference type="InterPro" id="IPR013650">
    <property type="entry name" value="ATP-grasp_succ-CoA_synth-type"/>
</dbReference>
<dbReference type="InterPro" id="IPR013815">
    <property type="entry name" value="ATP_grasp_subdomain_1"/>
</dbReference>
<dbReference type="InterPro" id="IPR017866">
    <property type="entry name" value="Succ-CoA_synthase_bsu_CS"/>
</dbReference>
<dbReference type="InterPro" id="IPR005811">
    <property type="entry name" value="SUCC_ACL_C"/>
</dbReference>
<dbReference type="InterPro" id="IPR005809">
    <property type="entry name" value="Succ_CoA_ligase-like_bsu"/>
</dbReference>
<dbReference type="InterPro" id="IPR016102">
    <property type="entry name" value="Succinyl-CoA_synth-like"/>
</dbReference>
<dbReference type="NCBIfam" id="NF001913">
    <property type="entry name" value="PRK00696.1"/>
    <property type="match status" value="1"/>
</dbReference>
<dbReference type="NCBIfam" id="TIGR01016">
    <property type="entry name" value="sucCoAbeta"/>
    <property type="match status" value="1"/>
</dbReference>
<dbReference type="PANTHER" id="PTHR11815:SF10">
    <property type="entry name" value="SUCCINATE--COA LIGASE [GDP-FORMING] SUBUNIT BETA, MITOCHONDRIAL"/>
    <property type="match status" value="1"/>
</dbReference>
<dbReference type="PANTHER" id="PTHR11815">
    <property type="entry name" value="SUCCINYL-COA SYNTHETASE BETA CHAIN"/>
    <property type="match status" value="1"/>
</dbReference>
<dbReference type="Pfam" id="PF08442">
    <property type="entry name" value="ATP-grasp_2"/>
    <property type="match status" value="1"/>
</dbReference>
<dbReference type="Pfam" id="PF00549">
    <property type="entry name" value="Ligase_CoA"/>
    <property type="match status" value="1"/>
</dbReference>
<dbReference type="PIRSF" id="PIRSF001554">
    <property type="entry name" value="SucCS_beta"/>
    <property type="match status" value="1"/>
</dbReference>
<dbReference type="SUPFAM" id="SSF56059">
    <property type="entry name" value="Glutathione synthetase ATP-binding domain-like"/>
    <property type="match status" value="1"/>
</dbReference>
<dbReference type="SUPFAM" id="SSF52210">
    <property type="entry name" value="Succinyl-CoA synthetase domains"/>
    <property type="match status" value="1"/>
</dbReference>
<dbReference type="PROSITE" id="PS50975">
    <property type="entry name" value="ATP_GRASP"/>
    <property type="match status" value="1"/>
</dbReference>
<dbReference type="PROSITE" id="PS01217">
    <property type="entry name" value="SUCCINYL_COA_LIG_3"/>
    <property type="match status" value="1"/>
</dbReference>